<proteinExistence type="inferred from homology"/>
<protein>
    <recommendedName>
        <fullName evidence="1">Large ribosomal subunit protein bL19</fullName>
    </recommendedName>
    <alternativeName>
        <fullName evidence="2">50S ribosomal protein L19</fullName>
    </alternativeName>
</protein>
<organism>
    <name type="scientific">Legionella pneumophila (strain Paris)</name>
    <dbReference type="NCBI Taxonomy" id="297246"/>
    <lineage>
        <taxon>Bacteria</taxon>
        <taxon>Pseudomonadati</taxon>
        <taxon>Pseudomonadota</taxon>
        <taxon>Gammaproteobacteria</taxon>
        <taxon>Legionellales</taxon>
        <taxon>Legionellaceae</taxon>
        <taxon>Legionella</taxon>
    </lineage>
</organism>
<comment type="function">
    <text evidence="1">This protein is located at the 30S-50S ribosomal subunit interface and may play a role in the structure and function of the aminoacyl-tRNA binding site.</text>
</comment>
<comment type="similarity">
    <text evidence="1">Belongs to the bacterial ribosomal protein bL19 family.</text>
</comment>
<accession>Q5X7Z2</accession>
<gene>
    <name evidence="1" type="primary">rplS</name>
    <name type="ordered locus">lpp0463</name>
</gene>
<sequence>MTNIIDQINAEQMQGKEIPDFNPGDTVLVQVKVIEGNRERLQAFEGVVIAKRNRGLNSAFTVRKISHNVGVERVFQTYSPIVDSITVKRRGDVRRAKLYYLRNLAGRAARIKEKLSGKKGD</sequence>
<dbReference type="EMBL" id="CR628336">
    <property type="protein sequence ID" value="CAH11611.1"/>
    <property type="molecule type" value="Genomic_DNA"/>
</dbReference>
<dbReference type="RefSeq" id="WP_010946144.1">
    <property type="nucleotide sequence ID" value="NC_006368.1"/>
</dbReference>
<dbReference type="SMR" id="Q5X7Z2"/>
<dbReference type="GeneID" id="57034399"/>
<dbReference type="KEGG" id="lpp:lpp0463"/>
<dbReference type="LegioList" id="lpp0463"/>
<dbReference type="HOGENOM" id="CLU_103507_1_0_6"/>
<dbReference type="GO" id="GO:0022625">
    <property type="term" value="C:cytosolic large ribosomal subunit"/>
    <property type="evidence" value="ECO:0007669"/>
    <property type="project" value="TreeGrafter"/>
</dbReference>
<dbReference type="GO" id="GO:0003735">
    <property type="term" value="F:structural constituent of ribosome"/>
    <property type="evidence" value="ECO:0007669"/>
    <property type="project" value="InterPro"/>
</dbReference>
<dbReference type="GO" id="GO:0006412">
    <property type="term" value="P:translation"/>
    <property type="evidence" value="ECO:0007669"/>
    <property type="project" value="UniProtKB-UniRule"/>
</dbReference>
<dbReference type="FunFam" id="2.30.30.790:FF:000001">
    <property type="entry name" value="50S ribosomal protein L19"/>
    <property type="match status" value="1"/>
</dbReference>
<dbReference type="Gene3D" id="2.30.30.790">
    <property type="match status" value="1"/>
</dbReference>
<dbReference type="HAMAP" id="MF_00402">
    <property type="entry name" value="Ribosomal_bL19"/>
    <property type="match status" value="1"/>
</dbReference>
<dbReference type="InterPro" id="IPR001857">
    <property type="entry name" value="Ribosomal_bL19"/>
</dbReference>
<dbReference type="InterPro" id="IPR018257">
    <property type="entry name" value="Ribosomal_bL19_CS"/>
</dbReference>
<dbReference type="InterPro" id="IPR038657">
    <property type="entry name" value="Ribosomal_bL19_sf"/>
</dbReference>
<dbReference type="InterPro" id="IPR008991">
    <property type="entry name" value="Translation_prot_SH3-like_sf"/>
</dbReference>
<dbReference type="NCBIfam" id="TIGR01024">
    <property type="entry name" value="rplS_bact"/>
    <property type="match status" value="1"/>
</dbReference>
<dbReference type="PANTHER" id="PTHR15680:SF9">
    <property type="entry name" value="LARGE RIBOSOMAL SUBUNIT PROTEIN BL19M"/>
    <property type="match status" value="1"/>
</dbReference>
<dbReference type="PANTHER" id="PTHR15680">
    <property type="entry name" value="RIBOSOMAL PROTEIN L19"/>
    <property type="match status" value="1"/>
</dbReference>
<dbReference type="Pfam" id="PF01245">
    <property type="entry name" value="Ribosomal_L19"/>
    <property type="match status" value="1"/>
</dbReference>
<dbReference type="PIRSF" id="PIRSF002191">
    <property type="entry name" value="Ribosomal_L19"/>
    <property type="match status" value="1"/>
</dbReference>
<dbReference type="PRINTS" id="PR00061">
    <property type="entry name" value="RIBOSOMALL19"/>
</dbReference>
<dbReference type="SUPFAM" id="SSF50104">
    <property type="entry name" value="Translation proteins SH3-like domain"/>
    <property type="match status" value="1"/>
</dbReference>
<dbReference type="PROSITE" id="PS01015">
    <property type="entry name" value="RIBOSOMAL_L19"/>
    <property type="match status" value="1"/>
</dbReference>
<keyword id="KW-0687">Ribonucleoprotein</keyword>
<keyword id="KW-0689">Ribosomal protein</keyword>
<name>RL19_LEGPA</name>
<feature type="chain" id="PRO_0000163471" description="Large ribosomal subunit protein bL19">
    <location>
        <begin position="1"/>
        <end position="121"/>
    </location>
</feature>
<reference key="1">
    <citation type="journal article" date="2004" name="Nat. Genet.">
        <title>Evidence in the Legionella pneumophila genome for exploitation of host cell functions and high genome plasticity.</title>
        <authorList>
            <person name="Cazalet C."/>
            <person name="Rusniok C."/>
            <person name="Brueggemann H."/>
            <person name="Zidane N."/>
            <person name="Magnier A."/>
            <person name="Ma L."/>
            <person name="Tichit M."/>
            <person name="Jarraud S."/>
            <person name="Bouchier C."/>
            <person name="Vandenesch F."/>
            <person name="Kunst F."/>
            <person name="Etienne J."/>
            <person name="Glaser P."/>
            <person name="Buchrieser C."/>
        </authorList>
    </citation>
    <scope>NUCLEOTIDE SEQUENCE [LARGE SCALE GENOMIC DNA]</scope>
    <source>
        <strain>Paris</strain>
    </source>
</reference>
<evidence type="ECO:0000255" key="1">
    <source>
        <dbReference type="HAMAP-Rule" id="MF_00402"/>
    </source>
</evidence>
<evidence type="ECO:0000305" key="2"/>